<protein>
    <recommendedName>
        <fullName>Nuclease SbcCD subunit D</fullName>
    </recommendedName>
</protein>
<keyword id="KW-0233">DNA recombination</keyword>
<keyword id="KW-0235">DNA replication</keyword>
<keyword id="KW-0255">Endonuclease</keyword>
<keyword id="KW-0269">Exonuclease</keyword>
<keyword id="KW-0378">Hydrolase</keyword>
<keyword id="KW-0540">Nuclease</keyword>
<accession>Q2FH89</accession>
<name>SBCD_STAA3</name>
<gene>
    <name type="primary">sbcD</name>
    <name type="ordered locus">SAUSA300_1242</name>
</gene>
<organism>
    <name type="scientific">Staphylococcus aureus (strain USA300)</name>
    <dbReference type="NCBI Taxonomy" id="367830"/>
    <lineage>
        <taxon>Bacteria</taxon>
        <taxon>Bacillati</taxon>
        <taxon>Bacillota</taxon>
        <taxon>Bacilli</taxon>
        <taxon>Bacillales</taxon>
        <taxon>Staphylococcaceae</taxon>
        <taxon>Staphylococcus</taxon>
    </lineage>
</organism>
<sequence>MKIIHTADWHLGKILNGKQLLEDQAYILDMFVEKMKEEEPDIIVIAGDLYDTTYPSKDAIMLLEQAIGKLNLELRIPIIIISGNHDGKERLNYGASWFEHNQLFIRTDFTSINSPIEINGVNFYTLPYATVSEMKHYFEDDTIETHQQGITRCIETIAPEIDEDAVNILISHLTVQGGKTSDSERPLTIGTVESVQKGVFDIFDYVMLGHLHHPFSIEDDKIKYSGSLLQYSFSEAGQAKGYRRVTINDGIINDVFIPLKPLRQLEIISGEYNDVINEKVHVKNKDNYLHFKLKNMSHITDPMMSLKQIYPNTLALTNETFNYNEENNAIEISEKDDMSIIEMFYKHITDKELSDIQSKKIKNILENELRKED</sequence>
<reference key="1">
    <citation type="journal article" date="2006" name="Lancet">
        <title>Complete genome sequence of USA300, an epidemic clone of community-acquired meticillin-resistant Staphylococcus aureus.</title>
        <authorList>
            <person name="Diep B.A."/>
            <person name="Gill S.R."/>
            <person name="Chang R.F."/>
            <person name="Phan T.H."/>
            <person name="Chen J.H."/>
            <person name="Davidson M.G."/>
            <person name="Lin F."/>
            <person name="Lin J."/>
            <person name="Carleton H.A."/>
            <person name="Mongodin E.F."/>
            <person name="Sensabaugh G.F."/>
            <person name="Perdreau-Remington F."/>
        </authorList>
    </citation>
    <scope>NUCLEOTIDE SEQUENCE [LARGE SCALE GENOMIC DNA]</scope>
    <source>
        <strain>USA300</strain>
    </source>
</reference>
<evidence type="ECO:0000250" key="1"/>
<evidence type="ECO:0000305" key="2"/>
<comment type="function">
    <text evidence="1">SbcCD cleaves DNA hairpin structures. These structures can inhibit DNA replication and are intermediates in certain DNA recombination reactions. The complex acts as a 3'-&gt;5' double strand exonuclease that can open hairpins. It also has a 5' single-strand endonuclease activity (By similarity).</text>
</comment>
<comment type="subunit">
    <text evidence="1">Heterodimer of SbcC and SbcD.</text>
</comment>
<comment type="similarity">
    <text evidence="2">Belongs to the SbcD family.</text>
</comment>
<feature type="chain" id="PRO_0000338491" description="Nuclease SbcCD subunit D">
    <location>
        <begin position="1"/>
        <end position="373"/>
    </location>
</feature>
<proteinExistence type="inferred from homology"/>
<dbReference type="EMBL" id="CP000255">
    <property type="protein sequence ID" value="ABD21096.1"/>
    <property type="molecule type" value="Genomic_DNA"/>
</dbReference>
<dbReference type="RefSeq" id="WP_000691284.1">
    <property type="nucleotide sequence ID" value="NZ_CP027476.1"/>
</dbReference>
<dbReference type="SMR" id="Q2FH89"/>
<dbReference type="KEGG" id="saa:SAUSA300_1242"/>
<dbReference type="HOGENOM" id="CLU_038045_0_1_9"/>
<dbReference type="Proteomes" id="UP000001939">
    <property type="component" value="Chromosome"/>
</dbReference>
<dbReference type="GO" id="GO:0008408">
    <property type="term" value="F:3'-5' exonuclease activity"/>
    <property type="evidence" value="ECO:0007669"/>
    <property type="project" value="InterPro"/>
</dbReference>
<dbReference type="GO" id="GO:0004519">
    <property type="term" value="F:endonuclease activity"/>
    <property type="evidence" value="ECO:0007669"/>
    <property type="project" value="UniProtKB-KW"/>
</dbReference>
<dbReference type="GO" id="GO:0006310">
    <property type="term" value="P:DNA recombination"/>
    <property type="evidence" value="ECO:0007669"/>
    <property type="project" value="UniProtKB-KW"/>
</dbReference>
<dbReference type="GO" id="GO:0006260">
    <property type="term" value="P:DNA replication"/>
    <property type="evidence" value="ECO:0007669"/>
    <property type="project" value="UniProtKB-KW"/>
</dbReference>
<dbReference type="CDD" id="cd00840">
    <property type="entry name" value="MPP_Mre11_N"/>
    <property type="match status" value="1"/>
</dbReference>
<dbReference type="Gene3D" id="3.60.21.10">
    <property type="match status" value="1"/>
</dbReference>
<dbReference type="InterPro" id="IPR004843">
    <property type="entry name" value="Calcineurin-like_PHP_ApaH"/>
</dbReference>
<dbReference type="InterPro" id="IPR050535">
    <property type="entry name" value="DNA_Repair-Maintenance_Comp"/>
</dbReference>
<dbReference type="InterPro" id="IPR029052">
    <property type="entry name" value="Metallo-depent_PP-like"/>
</dbReference>
<dbReference type="InterPro" id="IPR041796">
    <property type="entry name" value="Mre11_N"/>
</dbReference>
<dbReference type="InterPro" id="IPR053381">
    <property type="entry name" value="SbcCD_nuclease"/>
</dbReference>
<dbReference type="InterPro" id="IPR004593">
    <property type="entry name" value="SbcD"/>
</dbReference>
<dbReference type="InterPro" id="IPR026843">
    <property type="entry name" value="SbcD_C"/>
</dbReference>
<dbReference type="NCBIfam" id="TIGR00619">
    <property type="entry name" value="sbcd"/>
    <property type="match status" value="1"/>
</dbReference>
<dbReference type="NCBIfam" id="NF041753">
    <property type="entry name" value="sbcd_Staph"/>
    <property type="match status" value="1"/>
</dbReference>
<dbReference type="PANTHER" id="PTHR30337">
    <property type="entry name" value="COMPONENT OF ATP-DEPENDENT DSDNA EXONUCLEASE"/>
    <property type="match status" value="1"/>
</dbReference>
<dbReference type="PANTHER" id="PTHR30337:SF0">
    <property type="entry name" value="NUCLEASE SBCCD SUBUNIT D"/>
    <property type="match status" value="1"/>
</dbReference>
<dbReference type="Pfam" id="PF00149">
    <property type="entry name" value="Metallophos"/>
    <property type="match status" value="1"/>
</dbReference>
<dbReference type="Pfam" id="PF12320">
    <property type="entry name" value="SbcD_C"/>
    <property type="match status" value="1"/>
</dbReference>
<dbReference type="SUPFAM" id="SSF56300">
    <property type="entry name" value="Metallo-dependent phosphatases"/>
    <property type="match status" value="1"/>
</dbReference>